<protein>
    <recommendedName>
        <fullName>Cytochrome b</fullName>
    </recommendedName>
    <alternativeName>
        <fullName>Complex III subunit 3</fullName>
    </alternativeName>
    <alternativeName>
        <fullName>Complex III subunit III</fullName>
    </alternativeName>
    <alternativeName>
        <fullName>Cytochrome b-c1 complex subunit 3</fullName>
    </alternativeName>
    <alternativeName>
        <fullName>Ubiquinol-cytochrome-c reductase complex cytochrome b subunit</fullName>
    </alternativeName>
</protein>
<name>CYB_EULFL</name>
<geneLocation type="mitochondrion"/>
<accession>O99798</accession>
<gene>
    <name type="primary">MT-CYB</name>
    <name type="synonym">COB</name>
    <name type="synonym">CYTB</name>
    <name type="synonym">MTCYB</name>
</gene>
<comment type="function">
    <text evidence="2">Component of the ubiquinol-cytochrome c reductase complex (complex III or cytochrome b-c1 complex) that is part of the mitochondrial respiratory chain. The b-c1 complex mediates electron transfer from ubiquinol to cytochrome c. Contributes to the generation of a proton gradient across the mitochondrial membrane that is then used for ATP synthesis.</text>
</comment>
<comment type="cofactor">
    <cofactor evidence="2">
        <name>heme b</name>
        <dbReference type="ChEBI" id="CHEBI:60344"/>
    </cofactor>
    <text evidence="2">Binds 2 heme b groups non-covalently.</text>
</comment>
<comment type="subunit">
    <text evidence="2">The cytochrome bc1 complex contains 11 subunits: 3 respiratory subunits (MT-CYB, CYC1 and UQCRFS1), 2 core proteins (UQCRC1 and UQCRC2) and 6 low-molecular weight proteins (UQCRH/QCR6, UQCRB/QCR7, UQCRQ/QCR8, UQCR10/QCR9, UQCR11/QCR10 and a cleavage product of UQCRFS1). This cytochrome bc1 complex then forms a dimer.</text>
</comment>
<comment type="subcellular location">
    <subcellularLocation>
        <location evidence="2">Mitochondrion inner membrane</location>
        <topology evidence="2">Multi-pass membrane protein</topology>
    </subcellularLocation>
</comment>
<comment type="miscellaneous">
    <text evidence="1">Heme 1 (or BL or b562) is low-potential and absorbs at about 562 nm, and heme 2 (or BH or b566) is high-potential and absorbs at about 566 nm.</text>
</comment>
<comment type="similarity">
    <text evidence="3 4">Belongs to the cytochrome b family.</text>
</comment>
<comment type="caution">
    <text evidence="2">The full-length protein contains only eight transmembrane helices, not nine as predicted by bioinformatics tools.</text>
</comment>
<keyword id="KW-0249">Electron transport</keyword>
<keyword id="KW-0349">Heme</keyword>
<keyword id="KW-0408">Iron</keyword>
<keyword id="KW-0472">Membrane</keyword>
<keyword id="KW-0479">Metal-binding</keyword>
<keyword id="KW-0496">Mitochondrion</keyword>
<keyword id="KW-0999">Mitochondrion inner membrane</keyword>
<keyword id="KW-0679">Respiratory chain</keyword>
<keyword id="KW-0812">Transmembrane</keyword>
<keyword id="KW-1133">Transmembrane helix</keyword>
<keyword id="KW-0813">Transport</keyword>
<keyword id="KW-0830">Ubiquinone</keyword>
<reference key="1">
    <citation type="journal article" date="1999" name="Cladistics">
        <title>Phylogeny of the Lemuridae: effects of character and taxon sampling on the resolution of species relationships within Eulemur.</title>
        <authorList>
            <person name="Yoder A.D."/>
            <person name="Irwin J.A."/>
        </authorList>
    </citation>
    <scope>NUCLEOTIDE SEQUENCE [GENOMIC DNA]</scope>
    <source>
        <strain>Isolate DUPC 6146f</strain>
        <tissue>Spleen</tissue>
    </source>
</reference>
<feature type="chain" id="PRO_0000060955" description="Cytochrome b">
    <location>
        <begin position="1"/>
        <end position="379"/>
    </location>
</feature>
<feature type="transmembrane region" description="Helical" evidence="2">
    <location>
        <begin position="33"/>
        <end position="53"/>
    </location>
</feature>
<feature type="transmembrane region" description="Helical" evidence="2">
    <location>
        <begin position="77"/>
        <end position="98"/>
    </location>
</feature>
<feature type="transmembrane region" description="Helical" evidence="2">
    <location>
        <begin position="113"/>
        <end position="133"/>
    </location>
</feature>
<feature type="transmembrane region" description="Helical" evidence="2">
    <location>
        <begin position="178"/>
        <end position="198"/>
    </location>
</feature>
<feature type="transmembrane region" description="Helical" evidence="2">
    <location>
        <begin position="226"/>
        <end position="246"/>
    </location>
</feature>
<feature type="transmembrane region" description="Helical" evidence="2">
    <location>
        <begin position="288"/>
        <end position="308"/>
    </location>
</feature>
<feature type="transmembrane region" description="Helical" evidence="2">
    <location>
        <begin position="320"/>
        <end position="340"/>
    </location>
</feature>
<feature type="transmembrane region" description="Helical" evidence="2">
    <location>
        <begin position="347"/>
        <end position="367"/>
    </location>
</feature>
<feature type="binding site" description="axial binding residue" evidence="2">
    <location>
        <position position="83"/>
    </location>
    <ligand>
        <name>heme b</name>
        <dbReference type="ChEBI" id="CHEBI:60344"/>
        <label>b562</label>
    </ligand>
    <ligandPart>
        <name>Fe</name>
        <dbReference type="ChEBI" id="CHEBI:18248"/>
    </ligandPart>
</feature>
<feature type="binding site" description="axial binding residue" evidence="2">
    <location>
        <position position="97"/>
    </location>
    <ligand>
        <name>heme b</name>
        <dbReference type="ChEBI" id="CHEBI:60344"/>
        <label>b566</label>
    </ligand>
    <ligandPart>
        <name>Fe</name>
        <dbReference type="ChEBI" id="CHEBI:18248"/>
    </ligandPart>
</feature>
<feature type="binding site" description="axial binding residue" evidence="2">
    <location>
        <position position="182"/>
    </location>
    <ligand>
        <name>heme b</name>
        <dbReference type="ChEBI" id="CHEBI:60344"/>
        <label>b562</label>
    </ligand>
    <ligandPart>
        <name>Fe</name>
        <dbReference type="ChEBI" id="CHEBI:18248"/>
    </ligandPart>
</feature>
<feature type="binding site" description="axial binding residue" evidence="2">
    <location>
        <position position="196"/>
    </location>
    <ligand>
        <name>heme b</name>
        <dbReference type="ChEBI" id="CHEBI:60344"/>
        <label>b566</label>
    </ligand>
    <ligandPart>
        <name>Fe</name>
        <dbReference type="ChEBI" id="CHEBI:18248"/>
    </ligandPart>
</feature>
<feature type="binding site" evidence="2">
    <location>
        <position position="201"/>
    </location>
    <ligand>
        <name>a ubiquinone</name>
        <dbReference type="ChEBI" id="CHEBI:16389"/>
    </ligand>
</feature>
<evidence type="ECO:0000250" key="1"/>
<evidence type="ECO:0000250" key="2">
    <source>
        <dbReference type="UniProtKB" id="P00157"/>
    </source>
</evidence>
<evidence type="ECO:0000255" key="3">
    <source>
        <dbReference type="PROSITE-ProRule" id="PRU00967"/>
    </source>
</evidence>
<evidence type="ECO:0000255" key="4">
    <source>
        <dbReference type="PROSITE-ProRule" id="PRU00968"/>
    </source>
</evidence>
<organism>
    <name type="scientific">Eulemur flavifrons</name>
    <name type="common">Blue-eyed black lemur</name>
    <name type="synonym">Eulemur macaco flavifrons</name>
    <dbReference type="NCBI Taxonomy" id="87288"/>
    <lineage>
        <taxon>Eukaryota</taxon>
        <taxon>Metazoa</taxon>
        <taxon>Chordata</taxon>
        <taxon>Craniata</taxon>
        <taxon>Vertebrata</taxon>
        <taxon>Euteleostomi</taxon>
        <taxon>Mammalia</taxon>
        <taxon>Eutheria</taxon>
        <taxon>Euarchontoglires</taxon>
        <taxon>Primates</taxon>
        <taxon>Strepsirrhini</taxon>
        <taxon>Lemuriformes</taxon>
        <taxon>Lemuridae</taxon>
        <taxon>Eulemur</taxon>
    </lineage>
</organism>
<proteinExistence type="inferred from homology"/>
<dbReference type="EMBL" id="AF081050">
    <property type="protein sequence ID" value="AAD13167.1"/>
    <property type="molecule type" value="Genomic_DNA"/>
</dbReference>
<dbReference type="SMR" id="O99798"/>
<dbReference type="GO" id="GO:0005743">
    <property type="term" value="C:mitochondrial inner membrane"/>
    <property type="evidence" value="ECO:0007669"/>
    <property type="project" value="UniProtKB-SubCell"/>
</dbReference>
<dbReference type="GO" id="GO:0045275">
    <property type="term" value="C:respiratory chain complex III"/>
    <property type="evidence" value="ECO:0007669"/>
    <property type="project" value="InterPro"/>
</dbReference>
<dbReference type="GO" id="GO:0046872">
    <property type="term" value="F:metal ion binding"/>
    <property type="evidence" value="ECO:0007669"/>
    <property type="project" value="UniProtKB-KW"/>
</dbReference>
<dbReference type="GO" id="GO:0008121">
    <property type="term" value="F:ubiquinol-cytochrome-c reductase activity"/>
    <property type="evidence" value="ECO:0007669"/>
    <property type="project" value="InterPro"/>
</dbReference>
<dbReference type="GO" id="GO:0006122">
    <property type="term" value="P:mitochondrial electron transport, ubiquinol to cytochrome c"/>
    <property type="evidence" value="ECO:0007669"/>
    <property type="project" value="TreeGrafter"/>
</dbReference>
<dbReference type="CDD" id="cd00290">
    <property type="entry name" value="cytochrome_b_C"/>
    <property type="match status" value="1"/>
</dbReference>
<dbReference type="CDD" id="cd00284">
    <property type="entry name" value="Cytochrome_b_N"/>
    <property type="match status" value="1"/>
</dbReference>
<dbReference type="FunFam" id="1.20.810.10:FF:000002">
    <property type="entry name" value="Cytochrome b"/>
    <property type="match status" value="1"/>
</dbReference>
<dbReference type="Gene3D" id="1.20.810.10">
    <property type="entry name" value="Cytochrome Bc1 Complex, Chain C"/>
    <property type="match status" value="1"/>
</dbReference>
<dbReference type="InterPro" id="IPR005798">
    <property type="entry name" value="Cyt_b/b6_C"/>
</dbReference>
<dbReference type="InterPro" id="IPR036150">
    <property type="entry name" value="Cyt_b/b6_C_sf"/>
</dbReference>
<dbReference type="InterPro" id="IPR005797">
    <property type="entry name" value="Cyt_b/b6_N"/>
</dbReference>
<dbReference type="InterPro" id="IPR027387">
    <property type="entry name" value="Cytb/b6-like_sf"/>
</dbReference>
<dbReference type="InterPro" id="IPR030689">
    <property type="entry name" value="Cytochrome_b"/>
</dbReference>
<dbReference type="InterPro" id="IPR048260">
    <property type="entry name" value="Cytochrome_b_C_euk/bac"/>
</dbReference>
<dbReference type="InterPro" id="IPR048259">
    <property type="entry name" value="Cytochrome_b_N_euk/bac"/>
</dbReference>
<dbReference type="InterPro" id="IPR016174">
    <property type="entry name" value="Di-haem_cyt_TM"/>
</dbReference>
<dbReference type="PANTHER" id="PTHR19271">
    <property type="entry name" value="CYTOCHROME B"/>
    <property type="match status" value="1"/>
</dbReference>
<dbReference type="PANTHER" id="PTHR19271:SF16">
    <property type="entry name" value="CYTOCHROME B"/>
    <property type="match status" value="1"/>
</dbReference>
<dbReference type="Pfam" id="PF00032">
    <property type="entry name" value="Cytochrom_B_C"/>
    <property type="match status" value="1"/>
</dbReference>
<dbReference type="Pfam" id="PF00033">
    <property type="entry name" value="Cytochrome_B"/>
    <property type="match status" value="1"/>
</dbReference>
<dbReference type="PIRSF" id="PIRSF038885">
    <property type="entry name" value="COB"/>
    <property type="match status" value="1"/>
</dbReference>
<dbReference type="SUPFAM" id="SSF81648">
    <property type="entry name" value="a domain/subunit of cytochrome bc1 complex (Ubiquinol-cytochrome c reductase)"/>
    <property type="match status" value="1"/>
</dbReference>
<dbReference type="SUPFAM" id="SSF81342">
    <property type="entry name" value="Transmembrane di-heme cytochromes"/>
    <property type="match status" value="1"/>
</dbReference>
<dbReference type="PROSITE" id="PS51003">
    <property type="entry name" value="CYTB_CTER"/>
    <property type="match status" value="1"/>
</dbReference>
<dbReference type="PROSITE" id="PS51002">
    <property type="entry name" value="CYTB_NTER"/>
    <property type="match status" value="1"/>
</dbReference>
<sequence length="379" mass="42678">MNNIRKNHPLMKIMNNSFIDLPAPSNISSWWNFGSLLGACLALQIITGLFLAMHYTADTTTAFSSVAHICRDVNYGWIIRYLHANGASMFFLCLFIHIGRGLYYGSFTLTETWNMGIILLFTVMATAFMGYVLPWGQMSFWGATVITNLLSAIPYIGTNLVEWIWGGFSVDKATLTRFFAFHFILPFIITALVLVHLLFLHETGSNNPLGTSSDSDKIPFHPYYTIKDLLGLLLLVLLAMMLVLFSPDLLGDPDNYTPANPLSTPPHIKPEWYFLFAYAILRSIPNKLGGVLALISSILILAIIPTLHMAKQRSMLFRPLSQCLFWTLTADLFVLTWIGGQPVEYPFITIGQVASILYFTLILILMPMVSLIENKMLKW</sequence>